<keyword id="KW-0378">Hydrolase</keyword>
<keyword id="KW-0460">Magnesium</keyword>
<keyword id="KW-0479">Metal-binding</keyword>
<keyword id="KW-0704">Schiff base</keyword>
<accession>Q3K9Y2</accession>
<organism>
    <name type="scientific">Pseudomonas fluorescens (strain Pf0-1)</name>
    <dbReference type="NCBI Taxonomy" id="205922"/>
    <lineage>
        <taxon>Bacteria</taxon>
        <taxon>Pseudomonadati</taxon>
        <taxon>Pseudomonadota</taxon>
        <taxon>Gammaproteobacteria</taxon>
        <taxon>Pseudomonadales</taxon>
        <taxon>Pseudomonadaceae</taxon>
        <taxon>Pseudomonas</taxon>
    </lineage>
</organism>
<sequence>MNYNNPTQLQAAILDWAGTVVDFGSFAPTQIFVEAFAEFDVQVSIEEARGPMGMGKWDHIRTLCDQPQVAERYRKVFGRTPTDDDVTAIYNRFMPLQIEKIAEHSALIPGALETIANLRQQGIKIGSCSGYPKQVMDKVVALAATNGYVADHVVATDEVPNGRPWPAQALANVIALGIDDVAACVKIDDTVPGILEGRRAGMWTVALICSGNALGLDYEGYRALGSDALASERKRIHALFEGSRPHYMIDTITDLPEVIADINKRLANGEMPQSS</sequence>
<name>PHNX_PSEPF</name>
<comment type="function">
    <text evidence="1">Involved in phosphonate degradation.</text>
</comment>
<comment type="catalytic activity">
    <reaction evidence="1">
        <text>phosphonoacetaldehyde + H2O = acetaldehyde + phosphate + H(+)</text>
        <dbReference type="Rhea" id="RHEA:18905"/>
        <dbReference type="ChEBI" id="CHEBI:15343"/>
        <dbReference type="ChEBI" id="CHEBI:15377"/>
        <dbReference type="ChEBI" id="CHEBI:15378"/>
        <dbReference type="ChEBI" id="CHEBI:43474"/>
        <dbReference type="ChEBI" id="CHEBI:58383"/>
        <dbReference type="EC" id="3.11.1.1"/>
    </reaction>
</comment>
<comment type="cofactor">
    <cofactor evidence="1">
        <name>Mg(2+)</name>
        <dbReference type="ChEBI" id="CHEBI:18420"/>
    </cofactor>
    <text evidence="1">Binds 1 Mg(2+) ion per subunit.</text>
</comment>
<comment type="subunit">
    <text evidence="1">Homodimer.</text>
</comment>
<comment type="similarity">
    <text evidence="1">Belongs to the HAD-like hydrolase superfamily. PhnX family.</text>
</comment>
<reference key="1">
    <citation type="journal article" date="2009" name="Genome Biol.">
        <title>Genomic and genetic analyses of diversity and plant interactions of Pseudomonas fluorescens.</title>
        <authorList>
            <person name="Silby M.W."/>
            <person name="Cerdeno-Tarraga A.M."/>
            <person name="Vernikos G.S."/>
            <person name="Giddens S.R."/>
            <person name="Jackson R.W."/>
            <person name="Preston G.M."/>
            <person name="Zhang X.-X."/>
            <person name="Moon C.D."/>
            <person name="Gehrig S.M."/>
            <person name="Godfrey S.A.C."/>
            <person name="Knight C.G."/>
            <person name="Malone J.G."/>
            <person name="Robinson Z."/>
            <person name="Spiers A.J."/>
            <person name="Harris S."/>
            <person name="Challis G.L."/>
            <person name="Yaxley A.M."/>
            <person name="Harris D."/>
            <person name="Seeger K."/>
            <person name="Murphy L."/>
            <person name="Rutter S."/>
            <person name="Squares R."/>
            <person name="Quail M.A."/>
            <person name="Saunders E."/>
            <person name="Mavromatis K."/>
            <person name="Brettin T.S."/>
            <person name="Bentley S.D."/>
            <person name="Hothersall J."/>
            <person name="Stephens E."/>
            <person name="Thomas C.M."/>
            <person name="Parkhill J."/>
            <person name="Levy S.B."/>
            <person name="Rainey P.B."/>
            <person name="Thomson N.R."/>
        </authorList>
    </citation>
    <scope>NUCLEOTIDE SEQUENCE [LARGE SCALE GENOMIC DNA]</scope>
    <source>
        <strain>Pf0-1</strain>
    </source>
</reference>
<gene>
    <name evidence="1" type="primary">phnX</name>
    <name type="ordered locus">Pfl01_3684</name>
</gene>
<evidence type="ECO:0000255" key="1">
    <source>
        <dbReference type="HAMAP-Rule" id="MF_01375"/>
    </source>
</evidence>
<proteinExistence type="inferred from homology"/>
<feature type="chain" id="PRO_0000284595" description="Phosphonoacetaldehyde hydrolase">
    <location>
        <begin position="1"/>
        <end position="275"/>
    </location>
</feature>
<feature type="active site" description="Nucleophile" evidence="1">
    <location>
        <position position="15"/>
    </location>
</feature>
<feature type="active site" description="Schiff-base intermediate with substrate" evidence="1">
    <location>
        <position position="56"/>
    </location>
</feature>
<feature type="binding site" evidence="1">
    <location>
        <position position="15"/>
    </location>
    <ligand>
        <name>Mg(2+)</name>
        <dbReference type="ChEBI" id="CHEBI:18420"/>
    </ligand>
</feature>
<feature type="binding site" evidence="1">
    <location>
        <position position="17"/>
    </location>
    <ligand>
        <name>Mg(2+)</name>
        <dbReference type="ChEBI" id="CHEBI:18420"/>
    </ligand>
</feature>
<feature type="binding site" evidence="1">
    <location>
        <position position="189"/>
    </location>
    <ligand>
        <name>Mg(2+)</name>
        <dbReference type="ChEBI" id="CHEBI:18420"/>
    </ligand>
</feature>
<protein>
    <recommendedName>
        <fullName evidence="1">Phosphonoacetaldehyde hydrolase</fullName>
        <shortName evidence="1">Phosphonatase</shortName>
        <ecNumber evidence="1">3.11.1.1</ecNumber>
    </recommendedName>
    <alternativeName>
        <fullName evidence="1">Phosphonoacetaldehyde phosphonohydrolase</fullName>
    </alternativeName>
</protein>
<dbReference type="EC" id="3.11.1.1" evidence="1"/>
<dbReference type="EMBL" id="CP000094">
    <property type="protein sequence ID" value="ABA75422.1"/>
    <property type="molecule type" value="Genomic_DNA"/>
</dbReference>
<dbReference type="RefSeq" id="WP_011335027.1">
    <property type="nucleotide sequence ID" value="NC_007492.2"/>
</dbReference>
<dbReference type="SMR" id="Q3K9Y2"/>
<dbReference type="KEGG" id="pfo:Pfl01_3684"/>
<dbReference type="eggNOG" id="COG0637">
    <property type="taxonomic scope" value="Bacteria"/>
</dbReference>
<dbReference type="HOGENOM" id="CLU_045011_12_0_6"/>
<dbReference type="Proteomes" id="UP000002704">
    <property type="component" value="Chromosome"/>
</dbReference>
<dbReference type="GO" id="GO:0005829">
    <property type="term" value="C:cytosol"/>
    <property type="evidence" value="ECO:0007669"/>
    <property type="project" value="TreeGrafter"/>
</dbReference>
<dbReference type="GO" id="GO:0000287">
    <property type="term" value="F:magnesium ion binding"/>
    <property type="evidence" value="ECO:0007669"/>
    <property type="project" value="UniProtKB-UniRule"/>
</dbReference>
<dbReference type="GO" id="GO:0008967">
    <property type="term" value="F:phosphoglycolate phosphatase activity"/>
    <property type="evidence" value="ECO:0007669"/>
    <property type="project" value="TreeGrafter"/>
</dbReference>
<dbReference type="GO" id="GO:0050194">
    <property type="term" value="F:phosphonoacetaldehyde hydrolase activity"/>
    <property type="evidence" value="ECO:0007669"/>
    <property type="project" value="UniProtKB-UniRule"/>
</dbReference>
<dbReference type="GO" id="GO:0006281">
    <property type="term" value="P:DNA repair"/>
    <property type="evidence" value="ECO:0007669"/>
    <property type="project" value="TreeGrafter"/>
</dbReference>
<dbReference type="GO" id="GO:0019700">
    <property type="term" value="P:organic phosphonate catabolic process"/>
    <property type="evidence" value="ECO:0007669"/>
    <property type="project" value="InterPro"/>
</dbReference>
<dbReference type="CDD" id="cd02586">
    <property type="entry name" value="HAD_PHN"/>
    <property type="match status" value="1"/>
</dbReference>
<dbReference type="FunFam" id="1.10.150.240:FF:000006">
    <property type="entry name" value="Phosphonoacetaldehyde hydrolase"/>
    <property type="match status" value="1"/>
</dbReference>
<dbReference type="Gene3D" id="3.40.50.1000">
    <property type="entry name" value="HAD superfamily/HAD-like"/>
    <property type="match status" value="1"/>
</dbReference>
<dbReference type="Gene3D" id="1.10.150.240">
    <property type="entry name" value="Putative phosphatase, domain 2"/>
    <property type="match status" value="1"/>
</dbReference>
<dbReference type="HAMAP" id="MF_01375">
    <property type="entry name" value="PhnX"/>
    <property type="match status" value="1"/>
</dbReference>
<dbReference type="InterPro" id="IPR050155">
    <property type="entry name" value="HAD-like_hydrolase_sf"/>
</dbReference>
<dbReference type="InterPro" id="IPR036412">
    <property type="entry name" value="HAD-like_sf"/>
</dbReference>
<dbReference type="InterPro" id="IPR006439">
    <property type="entry name" value="HAD-SF_hydro_IA"/>
</dbReference>
<dbReference type="InterPro" id="IPR023214">
    <property type="entry name" value="HAD_sf"/>
</dbReference>
<dbReference type="InterPro" id="IPR023198">
    <property type="entry name" value="PGP-like_dom2"/>
</dbReference>
<dbReference type="InterPro" id="IPR006323">
    <property type="entry name" value="Phosphonoacetald_hydro"/>
</dbReference>
<dbReference type="NCBIfam" id="TIGR01509">
    <property type="entry name" value="HAD-SF-IA-v3"/>
    <property type="match status" value="1"/>
</dbReference>
<dbReference type="NCBIfam" id="TIGR01422">
    <property type="entry name" value="phosphonatase"/>
    <property type="match status" value="1"/>
</dbReference>
<dbReference type="PANTHER" id="PTHR43434">
    <property type="entry name" value="PHOSPHOGLYCOLATE PHOSPHATASE"/>
    <property type="match status" value="1"/>
</dbReference>
<dbReference type="PANTHER" id="PTHR43434:SF19">
    <property type="entry name" value="PHOSPHONOACETALDEHYDE HYDROLASE"/>
    <property type="match status" value="1"/>
</dbReference>
<dbReference type="Pfam" id="PF00702">
    <property type="entry name" value="Hydrolase"/>
    <property type="match status" value="1"/>
</dbReference>
<dbReference type="SFLD" id="SFLDG01135">
    <property type="entry name" value="C1.5.6:_HAD__Beta-PGM__Phospha"/>
    <property type="match status" value="1"/>
</dbReference>
<dbReference type="SFLD" id="SFLDF00038">
    <property type="entry name" value="phosphonoacetaldehyde_hydrolas"/>
    <property type="match status" value="1"/>
</dbReference>
<dbReference type="SUPFAM" id="SSF56784">
    <property type="entry name" value="HAD-like"/>
    <property type="match status" value="1"/>
</dbReference>